<organism>
    <name type="scientific">Coprothermobacter proteolyticus (strain ATCC 35245 / DSM 5265 / OCM 4 / BT)</name>
    <dbReference type="NCBI Taxonomy" id="309798"/>
    <lineage>
        <taxon>Bacteria</taxon>
        <taxon>Pseudomonadati</taxon>
        <taxon>Coprothermobacterota</taxon>
        <taxon>Coprothermobacteria</taxon>
        <taxon>Coprothermobacterales</taxon>
        <taxon>Coprothermobacteraceae</taxon>
        <taxon>Coprothermobacter</taxon>
    </lineage>
</organism>
<protein>
    <recommendedName>
        <fullName evidence="1">Small ribosomal subunit protein uS13</fullName>
    </recommendedName>
    <alternativeName>
        <fullName evidence="3">30S ribosomal protein S13</fullName>
    </alternativeName>
</protein>
<name>RS13_COPPD</name>
<sequence length="124" mass="14149">MARIVGVELPDNKRIVFALPRIYGIGKSTAEDICEALGIDPMQKLGELTPEQINTLQDYITAHYKVEGDLRREVAMNIKRLMDIKCYRGIRHQRGLPVRGQRTRHNARTRKGPRKTVGAKKGKR</sequence>
<comment type="function">
    <text evidence="1">Located at the top of the head of the 30S subunit, it contacts several helices of the 16S rRNA. In the 70S ribosome it contacts the 23S rRNA (bridge B1a) and protein L5 of the 50S subunit (bridge B1b), connecting the 2 subunits; these bridges are implicated in subunit movement. Contacts the tRNAs in the A and P-sites.</text>
</comment>
<comment type="subunit">
    <text evidence="1">Part of the 30S ribosomal subunit. Forms a loose heterodimer with protein S19. Forms two bridges to the 50S subunit in the 70S ribosome.</text>
</comment>
<comment type="similarity">
    <text evidence="1">Belongs to the universal ribosomal protein uS13 family.</text>
</comment>
<dbReference type="EMBL" id="CP001145">
    <property type="protein sequence ID" value="ACI16936.1"/>
    <property type="molecule type" value="Genomic_DNA"/>
</dbReference>
<dbReference type="RefSeq" id="WP_012543588.1">
    <property type="nucleotide sequence ID" value="NC_011295.1"/>
</dbReference>
<dbReference type="SMR" id="B5Y963"/>
<dbReference type="STRING" id="309798.COPRO5265_0988"/>
<dbReference type="KEGG" id="cpo:COPRO5265_0988"/>
<dbReference type="eggNOG" id="COG0099">
    <property type="taxonomic scope" value="Bacteria"/>
</dbReference>
<dbReference type="HOGENOM" id="CLU_103849_1_2_9"/>
<dbReference type="OrthoDB" id="9803610at2"/>
<dbReference type="Proteomes" id="UP000001732">
    <property type="component" value="Chromosome"/>
</dbReference>
<dbReference type="GO" id="GO:0005829">
    <property type="term" value="C:cytosol"/>
    <property type="evidence" value="ECO:0007669"/>
    <property type="project" value="TreeGrafter"/>
</dbReference>
<dbReference type="GO" id="GO:0015935">
    <property type="term" value="C:small ribosomal subunit"/>
    <property type="evidence" value="ECO:0007669"/>
    <property type="project" value="TreeGrafter"/>
</dbReference>
<dbReference type="GO" id="GO:0019843">
    <property type="term" value="F:rRNA binding"/>
    <property type="evidence" value="ECO:0007669"/>
    <property type="project" value="UniProtKB-UniRule"/>
</dbReference>
<dbReference type="GO" id="GO:0003735">
    <property type="term" value="F:structural constituent of ribosome"/>
    <property type="evidence" value="ECO:0007669"/>
    <property type="project" value="InterPro"/>
</dbReference>
<dbReference type="GO" id="GO:0000049">
    <property type="term" value="F:tRNA binding"/>
    <property type="evidence" value="ECO:0007669"/>
    <property type="project" value="UniProtKB-UniRule"/>
</dbReference>
<dbReference type="GO" id="GO:0006412">
    <property type="term" value="P:translation"/>
    <property type="evidence" value="ECO:0007669"/>
    <property type="project" value="UniProtKB-UniRule"/>
</dbReference>
<dbReference type="FunFam" id="1.10.8.50:FF:000001">
    <property type="entry name" value="30S ribosomal protein S13"/>
    <property type="match status" value="1"/>
</dbReference>
<dbReference type="FunFam" id="4.10.910.10:FF:000001">
    <property type="entry name" value="30S ribosomal protein S13"/>
    <property type="match status" value="1"/>
</dbReference>
<dbReference type="Gene3D" id="1.10.8.50">
    <property type="match status" value="1"/>
</dbReference>
<dbReference type="Gene3D" id="4.10.910.10">
    <property type="entry name" value="30s ribosomal protein s13, domain 2"/>
    <property type="match status" value="1"/>
</dbReference>
<dbReference type="HAMAP" id="MF_01315">
    <property type="entry name" value="Ribosomal_uS13"/>
    <property type="match status" value="1"/>
</dbReference>
<dbReference type="InterPro" id="IPR027437">
    <property type="entry name" value="Rbsml_uS13_C"/>
</dbReference>
<dbReference type="InterPro" id="IPR001892">
    <property type="entry name" value="Ribosomal_uS13"/>
</dbReference>
<dbReference type="InterPro" id="IPR010979">
    <property type="entry name" value="Ribosomal_uS13-like_H2TH"/>
</dbReference>
<dbReference type="InterPro" id="IPR019980">
    <property type="entry name" value="Ribosomal_uS13_bac-type"/>
</dbReference>
<dbReference type="InterPro" id="IPR018269">
    <property type="entry name" value="Ribosomal_uS13_CS"/>
</dbReference>
<dbReference type="NCBIfam" id="TIGR03631">
    <property type="entry name" value="uS13_bact"/>
    <property type="match status" value="1"/>
</dbReference>
<dbReference type="PANTHER" id="PTHR10871">
    <property type="entry name" value="30S RIBOSOMAL PROTEIN S13/40S RIBOSOMAL PROTEIN S18"/>
    <property type="match status" value="1"/>
</dbReference>
<dbReference type="PANTHER" id="PTHR10871:SF1">
    <property type="entry name" value="SMALL RIBOSOMAL SUBUNIT PROTEIN US13M"/>
    <property type="match status" value="1"/>
</dbReference>
<dbReference type="Pfam" id="PF00416">
    <property type="entry name" value="Ribosomal_S13"/>
    <property type="match status" value="1"/>
</dbReference>
<dbReference type="PIRSF" id="PIRSF002134">
    <property type="entry name" value="Ribosomal_S13"/>
    <property type="match status" value="1"/>
</dbReference>
<dbReference type="SUPFAM" id="SSF46946">
    <property type="entry name" value="S13-like H2TH domain"/>
    <property type="match status" value="1"/>
</dbReference>
<dbReference type="PROSITE" id="PS00646">
    <property type="entry name" value="RIBOSOMAL_S13_1"/>
    <property type="match status" value="1"/>
</dbReference>
<dbReference type="PROSITE" id="PS50159">
    <property type="entry name" value="RIBOSOMAL_S13_2"/>
    <property type="match status" value="1"/>
</dbReference>
<accession>B5Y963</accession>
<keyword id="KW-1185">Reference proteome</keyword>
<keyword id="KW-0687">Ribonucleoprotein</keyword>
<keyword id="KW-0689">Ribosomal protein</keyword>
<keyword id="KW-0694">RNA-binding</keyword>
<keyword id="KW-0699">rRNA-binding</keyword>
<keyword id="KW-0820">tRNA-binding</keyword>
<gene>
    <name evidence="1" type="primary">rpsM</name>
    <name type="ordered locus">COPRO5265_0988</name>
</gene>
<proteinExistence type="inferred from homology"/>
<feature type="chain" id="PRO_1000141246" description="Small ribosomal subunit protein uS13">
    <location>
        <begin position="1"/>
        <end position="124"/>
    </location>
</feature>
<feature type="region of interest" description="Disordered" evidence="2">
    <location>
        <begin position="95"/>
        <end position="124"/>
    </location>
</feature>
<feature type="compositionally biased region" description="Basic residues" evidence="2">
    <location>
        <begin position="101"/>
        <end position="124"/>
    </location>
</feature>
<reference key="1">
    <citation type="submission" date="2008-08" db="EMBL/GenBank/DDBJ databases">
        <title>The complete genome sequence of Coprothermobacter proteolyticus strain ATCC 5245 / DSM 5265 / BT.</title>
        <authorList>
            <person name="Dodson R.J."/>
            <person name="Durkin A.S."/>
            <person name="Wu M."/>
            <person name="Eisen J."/>
            <person name="Sutton G."/>
        </authorList>
    </citation>
    <scope>NUCLEOTIDE SEQUENCE [LARGE SCALE GENOMIC DNA]</scope>
    <source>
        <strain>ATCC 35245 / DSM 5265 / OCM 4 / BT</strain>
    </source>
</reference>
<evidence type="ECO:0000255" key="1">
    <source>
        <dbReference type="HAMAP-Rule" id="MF_01315"/>
    </source>
</evidence>
<evidence type="ECO:0000256" key="2">
    <source>
        <dbReference type="SAM" id="MobiDB-lite"/>
    </source>
</evidence>
<evidence type="ECO:0000305" key="3"/>